<reference key="1">
    <citation type="journal article" date="1996" name="Genome Res.">
        <title>The human homolog T of the mouse T(Brachyury) gene; gene structure, cDNA sequence, and assignment to chromosome 6q27.</title>
        <authorList>
            <person name="Edwards Y.H."/>
            <person name="Putt W."/>
            <person name="Lekoape K.M."/>
            <person name="Stott D."/>
            <person name="Fox M."/>
            <person name="Hopkinson D.A."/>
            <person name="Sowden J."/>
        </authorList>
    </citation>
    <scope>NUCLEOTIDE SEQUENCE [MRNA] (ISOFORM 1)</scope>
</reference>
<reference key="2">
    <citation type="journal article" date="2003" name="Nature">
        <title>The DNA sequence and analysis of human chromosome 6.</title>
        <authorList>
            <person name="Mungall A.J."/>
            <person name="Palmer S.A."/>
            <person name="Sims S.K."/>
            <person name="Edwards C.A."/>
            <person name="Ashurst J.L."/>
            <person name="Wilming L."/>
            <person name="Jones M.C."/>
            <person name="Horton R."/>
            <person name="Hunt S.E."/>
            <person name="Scott C.E."/>
            <person name="Gilbert J.G.R."/>
            <person name="Clamp M.E."/>
            <person name="Bethel G."/>
            <person name="Milne S."/>
            <person name="Ainscough R."/>
            <person name="Almeida J.P."/>
            <person name="Ambrose K.D."/>
            <person name="Andrews T.D."/>
            <person name="Ashwell R.I.S."/>
            <person name="Babbage A.K."/>
            <person name="Bagguley C.L."/>
            <person name="Bailey J."/>
            <person name="Banerjee R."/>
            <person name="Barker D.J."/>
            <person name="Barlow K.F."/>
            <person name="Bates K."/>
            <person name="Beare D.M."/>
            <person name="Beasley H."/>
            <person name="Beasley O."/>
            <person name="Bird C.P."/>
            <person name="Blakey S.E."/>
            <person name="Bray-Allen S."/>
            <person name="Brook J."/>
            <person name="Brown A.J."/>
            <person name="Brown J.Y."/>
            <person name="Burford D.C."/>
            <person name="Burrill W."/>
            <person name="Burton J."/>
            <person name="Carder C."/>
            <person name="Carter N.P."/>
            <person name="Chapman J.C."/>
            <person name="Clark S.Y."/>
            <person name="Clark G."/>
            <person name="Clee C.M."/>
            <person name="Clegg S."/>
            <person name="Cobley V."/>
            <person name="Collier R.E."/>
            <person name="Collins J.E."/>
            <person name="Colman L.K."/>
            <person name="Corby N.R."/>
            <person name="Coville G.J."/>
            <person name="Culley K.M."/>
            <person name="Dhami P."/>
            <person name="Davies J."/>
            <person name="Dunn M."/>
            <person name="Earthrowl M.E."/>
            <person name="Ellington A.E."/>
            <person name="Evans K.A."/>
            <person name="Faulkner L."/>
            <person name="Francis M.D."/>
            <person name="Frankish A."/>
            <person name="Frankland J."/>
            <person name="French L."/>
            <person name="Garner P."/>
            <person name="Garnett J."/>
            <person name="Ghori M.J."/>
            <person name="Gilby L.M."/>
            <person name="Gillson C.J."/>
            <person name="Glithero R.J."/>
            <person name="Grafham D.V."/>
            <person name="Grant M."/>
            <person name="Gribble S."/>
            <person name="Griffiths C."/>
            <person name="Griffiths M.N.D."/>
            <person name="Hall R."/>
            <person name="Halls K.S."/>
            <person name="Hammond S."/>
            <person name="Harley J.L."/>
            <person name="Hart E.A."/>
            <person name="Heath P.D."/>
            <person name="Heathcott R."/>
            <person name="Holmes S.J."/>
            <person name="Howden P.J."/>
            <person name="Howe K.L."/>
            <person name="Howell G.R."/>
            <person name="Huckle E."/>
            <person name="Humphray S.J."/>
            <person name="Humphries M.D."/>
            <person name="Hunt A.R."/>
            <person name="Johnson C.M."/>
            <person name="Joy A.A."/>
            <person name="Kay M."/>
            <person name="Keenan S.J."/>
            <person name="Kimberley A.M."/>
            <person name="King A."/>
            <person name="Laird G.K."/>
            <person name="Langford C."/>
            <person name="Lawlor S."/>
            <person name="Leongamornlert D.A."/>
            <person name="Leversha M."/>
            <person name="Lloyd C.R."/>
            <person name="Lloyd D.M."/>
            <person name="Loveland J.E."/>
            <person name="Lovell J."/>
            <person name="Martin S."/>
            <person name="Mashreghi-Mohammadi M."/>
            <person name="Maslen G.L."/>
            <person name="Matthews L."/>
            <person name="McCann O.T."/>
            <person name="McLaren S.J."/>
            <person name="McLay K."/>
            <person name="McMurray A."/>
            <person name="Moore M.J.F."/>
            <person name="Mullikin J.C."/>
            <person name="Niblett D."/>
            <person name="Nickerson T."/>
            <person name="Novik K.L."/>
            <person name="Oliver K."/>
            <person name="Overton-Larty E.K."/>
            <person name="Parker A."/>
            <person name="Patel R."/>
            <person name="Pearce A.V."/>
            <person name="Peck A.I."/>
            <person name="Phillimore B.J.C.T."/>
            <person name="Phillips S."/>
            <person name="Plumb R.W."/>
            <person name="Porter K.M."/>
            <person name="Ramsey Y."/>
            <person name="Ranby S.A."/>
            <person name="Rice C.M."/>
            <person name="Ross M.T."/>
            <person name="Searle S.M."/>
            <person name="Sehra H.K."/>
            <person name="Sheridan E."/>
            <person name="Skuce C.D."/>
            <person name="Smith S."/>
            <person name="Smith M."/>
            <person name="Spraggon L."/>
            <person name="Squares S.L."/>
            <person name="Steward C.A."/>
            <person name="Sycamore N."/>
            <person name="Tamlyn-Hall G."/>
            <person name="Tester J."/>
            <person name="Theaker A.J."/>
            <person name="Thomas D.W."/>
            <person name="Thorpe A."/>
            <person name="Tracey A."/>
            <person name="Tromans A."/>
            <person name="Tubby B."/>
            <person name="Wall M."/>
            <person name="Wallis J.M."/>
            <person name="West A.P."/>
            <person name="White S.S."/>
            <person name="Whitehead S.L."/>
            <person name="Whittaker H."/>
            <person name="Wild A."/>
            <person name="Willey D.J."/>
            <person name="Wilmer T.E."/>
            <person name="Wood J.M."/>
            <person name="Wray P.W."/>
            <person name="Wyatt J.C."/>
            <person name="Young L."/>
            <person name="Younger R.M."/>
            <person name="Bentley D.R."/>
            <person name="Coulson A."/>
            <person name="Durbin R.M."/>
            <person name="Hubbard T."/>
            <person name="Sulston J.E."/>
            <person name="Dunham I."/>
            <person name="Rogers J."/>
            <person name="Beck S."/>
        </authorList>
    </citation>
    <scope>NUCLEOTIDE SEQUENCE [LARGE SCALE GENOMIC DNA]</scope>
</reference>
<reference key="3">
    <citation type="journal article" date="2004" name="Genome Res.">
        <title>The status, quality, and expansion of the NIH full-length cDNA project: the Mammalian Gene Collection (MGC).</title>
        <authorList>
            <consortium name="The MGC Project Team"/>
        </authorList>
    </citation>
    <scope>NUCLEOTIDE SEQUENCE [LARGE SCALE MRNA] (ISOFORM 2)</scope>
    <scope>VARIANT ASP-177</scope>
    <source>
        <tissue>Lung</tissue>
    </source>
</reference>
<reference key="4">
    <citation type="journal article" date="2004" name="Hum. Genet.">
        <title>The human T locus and spina bifida risk.</title>
        <authorList>
            <person name="Jensen L.E."/>
            <person name="Barbaux S."/>
            <person name="Hoess K."/>
            <person name="Fraterman S."/>
            <person name="Whitehead A.S."/>
            <person name="Mitchell L.E."/>
        </authorList>
    </citation>
    <scope>INVOLVEMENT IN SUSCEPTIBILITY TO NTD</scope>
</reference>
<reference key="5">
    <citation type="journal article" date="2009" name="Nat. Genet.">
        <title>T (brachyury) gene duplication confers major susceptibility to familial chordoma.</title>
        <authorList>
            <person name="Yang X.R."/>
            <person name="Ng D."/>
            <person name="Alcorta D.A."/>
            <person name="Liebsch N.J."/>
            <person name="Sheridan E."/>
            <person name="Li S."/>
            <person name="Goldstein A.M."/>
            <person name="Parry D.M."/>
            <person name="Kelley M.J."/>
        </authorList>
    </citation>
    <scope>INVOLVEMENT IN SUSCEPTIBILITY TO THE DEVELOPMENT OF CHORDOMA</scope>
</reference>
<reference key="6">
    <citation type="journal article" date="2012" name="Clin. Cancer Res.">
        <title>Brachyury, a driver of the epithelial-mesenchymal transition, is overexpressed in human lung tumors: an opportunity for novel interventions against lung cancer.</title>
        <authorList>
            <person name="Roselli M."/>
            <person name="Fernando R.I."/>
            <person name="Guadagni F."/>
            <person name="Spila A."/>
            <person name="Alessandroni J."/>
            <person name="Palmirotta R."/>
            <person name="Costarelli L."/>
            <person name="Litzinger M."/>
            <person name="Hamilton D."/>
            <person name="Huang B."/>
            <person name="Tucker J."/>
            <person name="Tsang K.Y."/>
            <person name="Schlom J."/>
            <person name="Palena C."/>
        </authorList>
    </citation>
    <scope>SUBCELLULAR LOCATION</scope>
    <scope>TISSUE SPECIFICITY</scope>
</reference>
<reference key="7">
    <citation type="journal article" date="2014" name="J. Med. Genet.">
        <title>Mutations in the T (brachyury) gene cause a novel syndrome consisting of sacral agenesis, abnormal ossification of the vertebral bodies and a persistent notochordal canal.</title>
        <authorList>
            <person name="Postma A.V."/>
            <person name="Alders M."/>
            <person name="Sylva M."/>
            <person name="Bilardo C.M."/>
            <person name="Pajkrt E."/>
            <person name="van Rijn R.R."/>
            <person name="Schulte-Merker S."/>
            <person name="Bulk S."/>
            <person name="Stefanovic S."/>
            <person name="Ilgun A."/>
            <person name="Barnett P."/>
            <person name="Mannens M.M."/>
            <person name="Moorman A.F."/>
            <person name="Oostra R.J."/>
            <person name="van Maarle M.C."/>
        </authorList>
    </citation>
    <scope>INVOLVEMENT IN SAVA</scope>
    <scope>VARIANT SAVA ARG-171</scope>
    <scope>CHARACTERIZATION OF SAVA ARG-171</scope>
    <scope>SUBCELLULAR LOCATION</scope>
</reference>
<reference key="8">
    <citation type="journal article" date="2019" name="Genet. Med.">
        <title>Autozygome and high throughput confirmation of disease genes candidacy.</title>
        <authorList>
            <person name="Maddirevula S."/>
            <person name="Alzahrani F."/>
            <person name="Al-Owain M."/>
            <person name="Al Muhaizea M.A."/>
            <person name="Kayyali H.R."/>
            <person name="AlHashem A."/>
            <person name="Rahbeeni Z."/>
            <person name="Al-Otaibi M."/>
            <person name="Alzaidan H.I."/>
            <person name="Balobaid A."/>
            <person name="El Khashab H.Y."/>
            <person name="Bubshait D.K."/>
            <person name="Faden M."/>
            <person name="Yamani S.A."/>
            <person name="Dabbagh O."/>
            <person name="Al-Mureikhi M."/>
            <person name="Jasser A.A."/>
            <person name="Alsaif H.S."/>
            <person name="Alluhaydan I."/>
            <person name="Seidahmed M.Z."/>
            <person name="Alabbasi B.H."/>
            <person name="Almogarri I."/>
            <person name="Kurdi W."/>
            <person name="Akleh H."/>
            <person name="Qari A."/>
            <person name="Al Tala S.M."/>
            <person name="Alhomaidi S."/>
            <person name="Kentab A.Y."/>
            <person name="Salih M.A."/>
            <person name="Chedrawi A."/>
            <person name="Alameer S."/>
            <person name="Tabarki B."/>
            <person name="Shamseldin H.E."/>
            <person name="Patel N."/>
            <person name="Ibrahim N."/>
            <person name="Abdulwahab F."/>
            <person name="Samira M."/>
            <person name="Goljan E."/>
            <person name="Abouelhoda M."/>
            <person name="Meyer B.F."/>
            <person name="Hashem M."/>
            <person name="Shaheen R."/>
            <person name="AlShahwan S."/>
            <person name="Alfadhel M."/>
            <person name="Ben-Omran T."/>
            <person name="Al-Qattan M.M."/>
            <person name="Monies D."/>
            <person name="Alkuraya F.S."/>
        </authorList>
    </citation>
    <scope>VARIANT NTD CYS-156</scope>
</reference>
<proteinExistence type="evidence at protein level"/>
<feature type="chain" id="PRO_0000184414" description="T-box transcription factor T">
    <location>
        <begin position="1"/>
        <end position="435"/>
    </location>
</feature>
<feature type="DNA-binding region" description="T-box" evidence="2">
    <location>
        <begin position="51"/>
        <end position="219"/>
    </location>
</feature>
<feature type="region of interest" description="Disordered" evidence="3">
    <location>
        <begin position="279"/>
        <end position="308"/>
    </location>
</feature>
<feature type="compositionally biased region" description="Polar residues" evidence="3">
    <location>
        <begin position="297"/>
        <end position="308"/>
    </location>
</feature>
<feature type="splice variant" id="VSP_044795" description="In isoform 2." evidence="10">
    <original>WGWLLPGTSTLCPPANPHPQFGGALSLPSTHSCDRYPTLRSHRSSPYPSPYAHRNNSPT</original>
    <variation>S</variation>
    <location>
        <begin position="244"/>
        <end position="302"/>
    </location>
</feature>
<feature type="sequence variant" id="VAR_082154" description="In NTD; uncertain significance; dbSNP:rs1779123176." evidence="9">
    <original>G</original>
    <variation>C</variation>
    <location>
        <position position="156"/>
    </location>
</feature>
<feature type="sequence variant" id="VAR_071251" description="In SAVA; reduced DNA binding activity; increased cell growth; altered expression of genes involved in ossification and notochord maintenance; dbSNP:rs587777303." evidence="8">
    <original>H</original>
    <variation>R</variation>
    <location>
        <position position="171"/>
    </location>
</feature>
<feature type="sequence variant" id="VAR_021982" description="In dbSNP:rs2305089." evidence="5">
    <original>G</original>
    <variation>D</variation>
    <location>
        <position position="177"/>
    </location>
</feature>
<feature type="sequence variant" id="VAR_024656" description="In dbSNP:rs3127328.">
    <original>G</original>
    <variation>S</variation>
    <location>
        <position position="356"/>
    </location>
</feature>
<feature type="sequence variant" id="VAR_063239" description="In dbSNP:rs77703807.">
    <original>V</original>
    <variation>I</variation>
    <location>
        <position position="358"/>
    </location>
</feature>
<feature type="sequence variant" id="VAR_032457" description="In dbSNP:rs35292451.">
    <original>V</original>
    <variation>M</variation>
    <location>
        <position position="367"/>
    </location>
</feature>
<feature type="sequence variant" id="VAR_020250" description="In dbSNP:rs3816300.">
    <original>N</original>
    <variation>S</variation>
    <location>
        <position position="369"/>
    </location>
</feature>
<feature type="sequence variant" id="VAR_032458" description="In dbSNP:rs34517945.">
    <original>E</original>
    <variation>K</variation>
    <location>
        <position position="402"/>
    </location>
</feature>
<feature type="strand" evidence="15">
    <location>
        <begin position="43"/>
        <end position="46"/>
    </location>
</feature>
<feature type="helix" evidence="15">
    <location>
        <begin position="49"/>
        <end position="58"/>
    </location>
</feature>
<feature type="strand" evidence="15">
    <location>
        <begin position="61"/>
        <end position="63"/>
    </location>
</feature>
<feature type="strand" evidence="15">
    <location>
        <begin position="65"/>
        <end position="67"/>
    </location>
</feature>
<feature type="strand" evidence="15">
    <location>
        <begin position="76"/>
        <end position="82"/>
    </location>
</feature>
<feature type="strand" evidence="15">
    <location>
        <begin position="86"/>
        <end position="96"/>
    </location>
</feature>
<feature type="strand" evidence="15">
    <location>
        <begin position="99"/>
        <end position="105"/>
    </location>
</feature>
<feature type="strand" evidence="15">
    <location>
        <begin position="108"/>
        <end position="114"/>
    </location>
</feature>
<feature type="strand" evidence="15">
    <location>
        <begin position="130"/>
        <end position="132"/>
    </location>
</feature>
<feature type="helix" evidence="15">
    <location>
        <begin position="133"/>
        <end position="138"/>
    </location>
</feature>
<feature type="strand" evidence="15">
    <location>
        <begin position="147"/>
        <end position="151"/>
    </location>
</feature>
<feature type="strand" evidence="14">
    <location>
        <begin position="154"/>
        <end position="159"/>
    </location>
</feature>
<feature type="strand" evidence="15">
    <location>
        <begin position="165"/>
        <end position="174"/>
    </location>
</feature>
<feature type="strand" evidence="13">
    <location>
        <begin position="176"/>
        <end position="178"/>
    </location>
</feature>
<feature type="strand" evidence="15">
    <location>
        <begin position="182"/>
        <end position="186"/>
    </location>
</feature>
<feature type="helix" evidence="15">
    <location>
        <begin position="188"/>
        <end position="190"/>
    </location>
</feature>
<feature type="strand" evidence="15">
    <location>
        <begin position="192"/>
        <end position="197"/>
    </location>
</feature>
<feature type="helix" evidence="15">
    <location>
        <begin position="201"/>
        <end position="210"/>
    </location>
</feature>
<feature type="helix" evidence="17">
    <location>
        <begin position="212"/>
        <end position="216"/>
    </location>
</feature>
<feature type="helix" evidence="16">
    <location>
        <begin position="218"/>
        <end position="222"/>
    </location>
</feature>
<organism>
    <name type="scientific">Homo sapiens</name>
    <name type="common">Human</name>
    <dbReference type="NCBI Taxonomy" id="9606"/>
    <lineage>
        <taxon>Eukaryota</taxon>
        <taxon>Metazoa</taxon>
        <taxon>Chordata</taxon>
        <taxon>Craniata</taxon>
        <taxon>Vertebrata</taxon>
        <taxon>Euteleostomi</taxon>
        <taxon>Mammalia</taxon>
        <taxon>Eutheria</taxon>
        <taxon>Euarchontoglires</taxon>
        <taxon>Primates</taxon>
        <taxon>Haplorrhini</taxon>
        <taxon>Catarrhini</taxon>
        <taxon>Hominidae</taxon>
        <taxon>Homo</taxon>
    </lineage>
</organism>
<sequence length="435" mass="47443">MSSPGTESAGKSLQYRVDHLLSAVENELQAGSEKGDPTERELRVGLEESELWLRFKELTNEMIVTKNGRRMFPVLKVNVSGLDPNAMYSFLLDFVAADNHRWKYVNGEWVPGGKPEPQAPSCVYIHPDSPNFGAHWMKAPVSFSKVKLTNKLNGGGQIMLNSLHKYEPRIHIVRVGGPQRMITSHCFPETQFIAVTAYQNEEITALKIKYNPFAKAFLDAKERSDHKEMMEEPGDSQQPGYSQWGWLLPGTSTLCPPANPHPQFGGALSLPSTHSCDRYPTLRSHRSSPYPSPYAHRNNSPTYSDNSPACLSMLQSHDNWSSLGMPAHPSMLPVSHNASPPTSSSQYPSLWSVSNGAVTPGSQAAAVSNGLGAQFFRGSPAHYTPLTHPVSAPSSSGSPLYEGAAAATDIVDSQYDAAAQGRLIASWTPVSPPSM</sequence>
<accession>O15178</accession>
<accession>E7ERD6</accession>
<accession>Q4KMP4</accession>
<evidence type="ECO:0000250" key="1">
    <source>
        <dbReference type="UniProtKB" id="P20293"/>
    </source>
</evidence>
<evidence type="ECO:0000255" key="2">
    <source>
        <dbReference type="PROSITE-ProRule" id="PRU00201"/>
    </source>
</evidence>
<evidence type="ECO:0000256" key="3">
    <source>
        <dbReference type="SAM" id="MobiDB-lite"/>
    </source>
</evidence>
<evidence type="ECO:0000269" key="4">
    <source>
    </source>
</evidence>
<evidence type="ECO:0000269" key="5">
    <source>
    </source>
</evidence>
<evidence type="ECO:0000269" key="6">
    <source>
    </source>
</evidence>
<evidence type="ECO:0000269" key="7">
    <source>
    </source>
</evidence>
<evidence type="ECO:0000269" key="8">
    <source>
    </source>
</evidence>
<evidence type="ECO:0000269" key="9">
    <source>
    </source>
</evidence>
<evidence type="ECO:0000303" key="10">
    <source>
    </source>
</evidence>
<evidence type="ECO:0000305" key="11"/>
<evidence type="ECO:0000312" key="12">
    <source>
        <dbReference type="HGNC" id="HGNC:11515"/>
    </source>
</evidence>
<evidence type="ECO:0007829" key="13">
    <source>
        <dbReference type="PDB" id="5QRJ"/>
    </source>
</evidence>
<evidence type="ECO:0007829" key="14">
    <source>
        <dbReference type="PDB" id="5QRM"/>
    </source>
</evidence>
<evidence type="ECO:0007829" key="15">
    <source>
        <dbReference type="PDB" id="5QS9"/>
    </source>
</evidence>
<evidence type="ECO:0007829" key="16">
    <source>
        <dbReference type="PDB" id="6F58"/>
    </source>
</evidence>
<evidence type="ECO:0007829" key="17">
    <source>
        <dbReference type="PDB" id="6ZU8"/>
    </source>
</evidence>
<gene>
    <name evidence="12" type="primary">TBXT</name>
    <name type="synonym">T</name>
</gene>
<name>TBXT_HUMAN</name>
<comment type="function">
    <text evidence="1">Involved in the transcriptional regulation of genes required for mesoderm formation and differentiation. Binds to a palindromic T site 5'-TTCACACCTAGGTGTGAA-3' DNA sequence and activates gene transcription when bound to such a site.</text>
</comment>
<comment type="subunit">
    <text evidence="1">Monomer.</text>
</comment>
<comment type="subcellular location">
    <subcellularLocation>
        <location evidence="7 8">Nucleus</location>
    </subcellularLocation>
</comment>
<comment type="alternative products">
    <event type="alternative splicing"/>
    <isoform>
        <id>O15178-1</id>
        <name>1</name>
        <sequence type="displayed"/>
    </isoform>
    <isoform>
        <id>O15178-2</id>
        <name>2</name>
        <sequence type="described" ref="VSP_044795"/>
    </isoform>
</comment>
<comment type="tissue specificity">
    <text evidence="7 9">Detected in testis, but not in other, normal tissues. Detected in lung tumors (at protein level).</text>
</comment>
<comment type="disease" evidence="4 9">
    <disease id="DI-02042">
        <name>Neural tube defects</name>
        <acronym>NTD</acronym>
        <description>Congenital malformations of the central nervous system and adjacent structures related to defective neural tube closure during the first trimester of pregnancy. Failure of neural tube closure can occur at any level of the embryonic axis. Common NTD forms include anencephaly, myelomeningocele and spina bifida, which result from the failure of fusion in the cranial and spinal region of the neural tube. NTDs have a multifactorial etiology encompassing both genetic and environmental components.</description>
        <dbReference type="MIM" id="182940"/>
    </disease>
    <text>Disease susceptibility is associated with variants affecting the gene represented in this entry.</text>
</comment>
<comment type="disease" evidence="6">
    <disease id="DI-02579">
        <name>Chordoma</name>
        <acronym>CHDM</acronym>
        <description>Rare, clinically malignant tumors derived from notochordal remnants. They occur along the length of the spinal axis, predominantly in the sphenooccipital, vertebral and sacrococcygeal regions. They are characterized by slow growth, local destruction of bone, extension into adjacent soft tissues and rarely, distant metastatic spread.</description>
        <dbReference type="MIM" id="215400"/>
    </disease>
    <text>Disease susceptibility is associated with variants affecting the gene represented in this entry. Susceptibility to development of chordomas is due to a T gene duplication.</text>
</comment>
<comment type="disease" evidence="8">
    <disease id="DI-04072">
        <name>Sacral agenesis with vertebral anomalies</name>
        <acronym>SAVA</acronym>
        <description>A disorder characterized by abnormalities of the spine, including sacral agenesis, abnormal ossification of all vertebral bodies, and a persistent notochordal canal during development.</description>
        <dbReference type="MIM" id="615709"/>
    </disease>
    <text>The disease is caused by variants affecting the gene represented in this entry.</text>
</comment>
<protein>
    <recommendedName>
        <fullName evidence="11">T-box transcription factor T</fullName>
    </recommendedName>
    <alternativeName>
        <fullName evidence="11">Brachyury protein</fullName>
    </alternativeName>
    <alternativeName>
        <fullName>Protein T</fullName>
    </alternativeName>
</protein>
<dbReference type="EMBL" id="AJ001699">
    <property type="protein sequence ID" value="CAA04938.1"/>
    <property type="molecule type" value="mRNA"/>
</dbReference>
<dbReference type="EMBL" id="AL627443">
    <property type="status" value="NOT_ANNOTATED_CDS"/>
    <property type="molecule type" value="Genomic_DNA"/>
</dbReference>
<dbReference type="EMBL" id="BC098425">
    <property type="protein sequence ID" value="AAH98425.1"/>
    <property type="molecule type" value="mRNA"/>
</dbReference>
<dbReference type="CCDS" id="CCDS5290.1">
    <molecule id="O15178-1"/>
</dbReference>
<dbReference type="CCDS" id="CCDS59045.1">
    <molecule id="O15178-2"/>
</dbReference>
<dbReference type="RefSeq" id="NP_001257413.1">
    <molecule id="O15178-2"/>
    <property type="nucleotide sequence ID" value="NM_001270484.2"/>
</dbReference>
<dbReference type="RefSeq" id="NP_003172.1">
    <molecule id="O15178-1"/>
    <property type="nucleotide sequence ID" value="NM_003181.4"/>
</dbReference>
<dbReference type="RefSeq" id="XP_047275225.1">
    <molecule id="O15178-1"/>
    <property type="nucleotide sequence ID" value="XM_047419269.1"/>
</dbReference>
<dbReference type="PDB" id="5QRF">
    <property type="method" value="X-ray"/>
    <property type="resolution" value="2.03 A"/>
    <property type="chains" value="A=41-211"/>
</dbReference>
<dbReference type="PDB" id="5QRG">
    <property type="method" value="X-ray"/>
    <property type="resolution" value="1.95 A"/>
    <property type="chains" value="A=41-211"/>
</dbReference>
<dbReference type="PDB" id="5QRH">
    <property type="method" value="X-ray"/>
    <property type="resolution" value="1.81 A"/>
    <property type="chains" value="A=41-211"/>
</dbReference>
<dbReference type="PDB" id="5QRI">
    <property type="method" value="X-ray"/>
    <property type="resolution" value="1.83 A"/>
    <property type="chains" value="A=41-211"/>
</dbReference>
<dbReference type="PDB" id="5QRJ">
    <property type="method" value="X-ray"/>
    <property type="resolution" value="1.81 A"/>
    <property type="chains" value="A=41-211"/>
</dbReference>
<dbReference type="PDB" id="5QRK">
    <property type="method" value="X-ray"/>
    <property type="resolution" value="1.63 A"/>
    <property type="chains" value="A=41-211"/>
</dbReference>
<dbReference type="PDB" id="5QRL">
    <property type="method" value="X-ray"/>
    <property type="resolution" value="1.76 A"/>
    <property type="chains" value="A=41-211"/>
</dbReference>
<dbReference type="PDB" id="5QRM">
    <property type="method" value="X-ray"/>
    <property type="resolution" value="1.55 A"/>
    <property type="chains" value="A=41-211"/>
</dbReference>
<dbReference type="PDB" id="5QRN">
    <property type="method" value="X-ray"/>
    <property type="resolution" value="1.62 A"/>
    <property type="chains" value="A=41-211"/>
</dbReference>
<dbReference type="PDB" id="5QRO">
    <property type="method" value="X-ray"/>
    <property type="resolution" value="1.61 A"/>
    <property type="chains" value="A=41-211"/>
</dbReference>
<dbReference type="PDB" id="5QRP">
    <property type="method" value="X-ray"/>
    <property type="resolution" value="1.67 A"/>
    <property type="chains" value="A=41-211"/>
</dbReference>
<dbReference type="PDB" id="5QRQ">
    <property type="method" value="X-ray"/>
    <property type="resolution" value="2.10 A"/>
    <property type="chains" value="A=41-211"/>
</dbReference>
<dbReference type="PDB" id="5QRR">
    <property type="method" value="X-ray"/>
    <property type="resolution" value="1.69 A"/>
    <property type="chains" value="A=41-211"/>
</dbReference>
<dbReference type="PDB" id="5QRS">
    <property type="method" value="X-ray"/>
    <property type="resolution" value="2.06 A"/>
    <property type="chains" value="A=41-211"/>
</dbReference>
<dbReference type="PDB" id="5QRT">
    <property type="method" value="X-ray"/>
    <property type="resolution" value="1.77 A"/>
    <property type="chains" value="A=41-211"/>
</dbReference>
<dbReference type="PDB" id="5QRU">
    <property type="method" value="X-ray"/>
    <property type="resolution" value="1.76 A"/>
    <property type="chains" value="A=41-211"/>
</dbReference>
<dbReference type="PDB" id="5QRV">
    <property type="method" value="X-ray"/>
    <property type="resolution" value="1.67 A"/>
    <property type="chains" value="A=41-211"/>
</dbReference>
<dbReference type="PDB" id="5QRW">
    <property type="method" value="X-ray"/>
    <property type="resolution" value="1.74 A"/>
    <property type="chains" value="A=41-211"/>
</dbReference>
<dbReference type="PDB" id="5QRX">
    <property type="method" value="X-ray"/>
    <property type="resolution" value="1.87 A"/>
    <property type="chains" value="A=41-211"/>
</dbReference>
<dbReference type="PDB" id="5QRY">
    <property type="method" value="X-ray"/>
    <property type="resolution" value="1.58 A"/>
    <property type="chains" value="A=41-211"/>
</dbReference>
<dbReference type="PDB" id="5QRZ">
    <property type="method" value="X-ray"/>
    <property type="resolution" value="1.96 A"/>
    <property type="chains" value="A=41-211"/>
</dbReference>
<dbReference type="PDB" id="5QS0">
    <property type="method" value="X-ray"/>
    <property type="resolution" value="1.60 A"/>
    <property type="chains" value="A=41-211"/>
</dbReference>
<dbReference type="PDB" id="5QS1">
    <property type="method" value="X-ray"/>
    <property type="resolution" value="1.66 A"/>
    <property type="chains" value="A=41-211"/>
</dbReference>
<dbReference type="PDB" id="5QS2">
    <property type="method" value="X-ray"/>
    <property type="resolution" value="1.68 A"/>
    <property type="chains" value="A=41-211"/>
</dbReference>
<dbReference type="PDB" id="5QS3">
    <property type="method" value="X-ray"/>
    <property type="resolution" value="1.71 A"/>
    <property type="chains" value="A=41-211"/>
</dbReference>
<dbReference type="PDB" id="5QS4">
    <property type="method" value="X-ray"/>
    <property type="resolution" value="1.65 A"/>
    <property type="chains" value="A=41-211"/>
</dbReference>
<dbReference type="PDB" id="5QS5">
    <property type="method" value="X-ray"/>
    <property type="resolution" value="1.81 A"/>
    <property type="chains" value="A=41-211"/>
</dbReference>
<dbReference type="PDB" id="5QS6">
    <property type="method" value="X-ray"/>
    <property type="resolution" value="1.67 A"/>
    <property type="chains" value="A=41-211"/>
</dbReference>
<dbReference type="PDB" id="5QS7">
    <property type="method" value="X-ray"/>
    <property type="resolution" value="1.66 A"/>
    <property type="chains" value="A=41-211"/>
</dbReference>
<dbReference type="PDB" id="5QS8">
    <property type="method" value="X-ray"/>
    <property type="resolution" value="1.47 A"/>
    <property type="chains" value="A=41-211"/>
</dbReference>
<dbReference type="PDB" id="5QS9">
    <property type="method" value="X-ray"/>
    <property type="resolution" value="1.43 A"/>
    <property type="chains" value="A=41-211"/>
</dbReference>
<dbReference type="PDB" id="5QSA">
    <property type="method" value="X-ray"/>
    <property type="resolution" value="1.55 A"/>
    <property type="chains" value="A=41-211"/>
</dbReference>
<dbReference type="PDB" id="5QSB">
    <property type="method" value="X-ray"/>
    <property type="resolution" value="1.82 A"/>
    <property type="chains" value="A=41-211"/>
</dbReference>
<dbReference type="PDB" id="5QSC">
    <property type="method" value="X-ray"/>
    <property type="resolution" value="1.62 A"/>
    <property type="chains" value="A=41-211"/>
</dbReference>
<dbReference type="PDB" id="5QSD">
    <property type="method" value="X-ray"/>
    <property type="resolution" value="1.87 A"/>
    <property type="chains" value="A=41-211"/>
</dbReference>
<dbReference type="PDB" id="5QSE">
    <property type="method" value="X-ray"/>
    <property type="resolution" value="2.01 A"/>
    <property type="chains" value="A=41-211"/>
</dbReference>
<dbReference type="PDB" id="5QSF">
    <property type="method" value="X-ray"/>
    <property type="resolution" value="1.96 A"/>
    <property type="chains" value="A=41-211"/>
</dbReference>
<dbReference type="PDB" id="5QSG">
    <property type="method" value="X-ray"/>
    <property type="resolution" value="1.87 A"/>
    <property type="chains" value="A=41-211"/>
</dbReference>
<dbReference type="PDB" id="5QSH">
    <property type="method" value="X-ray"/>
    <property type="resolution" value="1.90 A"/>
    <property type="chains" value="A=41-211"/>
</dbReference>
<dbReference type="PDB" id="5QSI">
    <property type="method" value="X-ray"/>
    <property type="resolution" value="1.64 A"/>
    <property type="chains" value="A=41-211"/>
</dbReference>
<dbReference type="PDB" id="5QSJ">
    <property type="method" value="X-ray"/>
    <property type="resolution" value="1.49 A"/>
    <property type="chains" value="A=41-211"/>
</dbReference>
<dbReference type="PDB" id="5QSK">
    <property type="method" value="X-ray"/>
    <property type="resolution" value="1.55 A"/>
    <property type="chains" value="A=41-211"/>
</dbReference>
<dbReference type="PDB" id="5QSL">
    <property type="method" value="X-ray"/>
    <property type="resolution" value="2.20 A"/>
    <property type="chains" value="A=41-211"/>
</dbReference>
<dbReference type="PDB" id="5QT0">
    <property type="method" value="X-ray"/>
    <property type="resolution" value="2.10 A"/>
    <property type="chains" value="A=41-211"/>
</dbReference>
<dbReference type="PDB" id="6F58">
    <property type="method" value="X-ray"/>
    <property type="resolution" value="2.25 A"/>
    <property type="chains" value="A/B=40-224"/>
</dbReference>
<dbReference type="PDB" id="6F59">
    <property type="method" value="X-ray"/>
    <property type="resolution" value="2.15 A"/>
    <property type="chains" value="A/B=41-224"/>
</dbReference>
<dbReference type="PDB" id="6ZU8">
    <property type="method" value="X-ray"/>
    <property type="resolution" value="1.95 A"/>
    <property type="chains" value="A=41-224"/>
</dbReference>
<dbReference type="PDB" id="7HI8">
    <property type="method" value="X-ray"/>
    <property type="resolution" value="1.54 A"/>
    <property type="chains" value="A=41-212"/>
</dbReference>
<dbReference type="PDB" id="7HI9">
    <property type="method" value="X-ray"/>
    <property type="resolution" value="1.42 A"/>
    <property type="chains" value="A=41-212"/>
</dbReference>
<dbReference type="PDB" id="7ZK2">
    <property type="method" value="X-ray"/>
    <property type="resolution" value="1.60 A"/>
    <property type="chains" value="A=41-211"/>
</dbReference>
<dbReference type="PDB" id="7ZKF">
    <property type="method" value="X-ray"/>
    <property type="resolution" value="1.49 A"/>
    <property type="chains" value="A=41-211"/>
</dbReference>
<dbReference type="PDB" id="7ZL2">
    <property type="method" value="X-ray"/>
    <property type="resolution" value="1.80 A"/>
    <property type="chains" value="A=41-211"/>
</dbReference>
<dbReference type="PDB" id="8A10">
    <property type="method" value="X-ray"/>
    <property type="resolution" value="1.88 A"/>
    <property type="chains" value="A=41-211"/>
</dbReference>
<dbReference type="PDB" id="8A7N">
    <property type="method" value="X-ray"/>
    <property type="resolution" value="1.90 A"/>
    <property type="chains" value="A=41-211"/>
</dbReference>
<dbReference type="PDB" id="8CDN">
    <property type="method" value="X-ray"/>
    <property type="resolution" value="2.55 A"/>
    <property type="chains" value="A=41-224"/>
</dbReference>
<dbReference type="PDB" id="8FMU">
    <property type="method" value="X-ray"/>
    <property type="resolution" value="2.03 A"/>
    <property type="chains" value="A/B=41-224"/>
</dbReference>
<dbReference type="PDBsum" id="5QRF"/>
<dbReference type="PDBsum" id="5QRG"/>
<dbReference type="PDBsum" id="5QRH"/>
<dbReference type="PDBsum" id="5QRI"/>
<dbReference type="PDBsum" id="5QRJ"/>
<dbReference type="PDBsum" id="5QRK"/>
<dbReference type="PDBsum" id="5QRL"/>
<dbReference type="PDBsum" id="5QRM"/>
<dbReference type="PDBsum" id="5QRN"/>
<dbReference type="PDBsum" id="5QRO"/>
<dbReference type="PDBsum" id="5QRP"/>
<dbReference type="PDBsum" id="5QRQ"/>
<dbReference type="PDBsum" id="5QRR"/>
<dbReference type="PDBsum" id="5QRS"/>
<dbReference type="PDBsum" id="5QRT"/>
<dbReference type="PDBsum" id="5QRU"/>
<dbReference type="PDBsum" id="5QRV"/>
<dbReference type="PDBsum" id="5QRW"/>
<dbReference type="PDBsum" id="5QRX"/>
<dbReference type="PDBsum" id="5QRY"/>
<dbReference type="PDBsum" id="5QRZ"/>
<dbReference type="PDBsum" id="5QS0"/>
<dbReference type="PDBsum" id="5QS1"/>
<dbReference type="PDBsum" id="5QS2"/>
<dbReference type="PDBsum" id="5QS3"/>
<dbReference type="PDBsum" id="5QS4"/>
<dbReference type="PDBsum" id="5QS5"/>
<dbReference type="PDBsum" id="5QS6"/>
<dbReference type="PDBsum" id="5QS7"/>
<dbReference type="PDBsum" id="5QS8"/>
<dbReference type="PDBsum" id="5QS9"/>
<dbReference type="PDBsum" id="5QSA"/>
<dbReference type="PDBsum" id="5QSB"/>
<dbReference type="PDBsum" id="5QSC"/>
<dbReference type="PDBsum" id="5QSD"/>
<dbReference type="PDBsum" id="5QSE"/>
<dbReference type="PDBsum" id="5QSF"/>
<dbReference type="PDBsum" id="5QSG"/>
<dbReference type="PDBsum" id="5QSH"/>
<dbReference type="PDBsum" id="5QSI"/>
<dbReference type="PDBsum" id="5QSJ"/>
<dbReference type="PDBsum" id="5QSK"/>
<dbReference type="PDBsum" id="5QSL"/>
<dbReference type="PDBsum" id="5QT0"/>
<dbReference type="PDBsum" id="6F58"/>
<dbReference type="PDBsum" id="6F59"/>
<dbReference type="PDBsum" id="6ZU8"/>
<dbReference type="PDBsum" id="7HI8"/>
<dbReference type="PDBsum" id="7HI9"/>
<dbReference type="PDBsum" id="7ZK2"/>
<dbReference type="PDBsum" id="7ZKF"/>
<dbReference type="PDBsum" id="7ZL2"/>
<dbReference type="PDBsum" id="8A10"/>
<dbReference type="PDBsum" id="8A7N"/>
<dbReference type="PDBsum" id="8CDN"/>
<dbReference type="PDBsum" id="8FMU"/>
<dbReference type="SMR" id="O15178"/>
<dbReference type="BioGRID" id="112726">
    <property type="interactions" value="116"/>
</dbReference>
<dbReference type="ELM" id="O15178"/>
<dbReference type="FunCoup" id="O15178">
    <property type="interactions" value="917"/>
</dbReference>
<dbReference type="IntAct" id="O15178">
    <property type="interactions" value="117"/>
</dbReference>
<dbReference type="STRING" id="9606.ENSP00000296946"/>
<dbReference type="GlyCosmos" id="O15178">
    <property type="glycosylation" value="4 sites, 1 glycan"/>
</dbReference>
<dbReference type="GlyGen" id="O15178">
    <property type="glycosylation" value="5 sites, 1 O-linked glycan (4 sites)"/>
</dbReference>
<dbReference type="iPTMnet" id="O15178"/>
<dbReference type="PhosphoSitePlus" id="O15178"/>
<dbReference type="BioMuta" id="T"/>
<dbReference type="MassIVE" id="O15178"/>
<dbReference type="PaxDb" id="9606-ENSP00000296946"/>
<dbReference type="PeptideAtlas" id="O15178"/>
<dbReference type="ProteomicsDB" id="17762"/>
<dbReference type="ProteomicsDB" id="48496">
    <molecule id="O15178-1"/>
</dbReference>
<dbReference type="Antibodypedia" id="925">
    <property type="antibodies" value="496 antibodies from 35 providers"/>
</dbReference>
<dbReference type="DNASU" id="6862"/>
<dbReference type="Ensembl" id="ENST00000296946.6">
    <molecule id="O15178-1"/>
    <property type="protein sequence ID" value="ENSP00000296946.2"/>
    <property type="gene ID" value="ENSG00000164458.10"/>
</dbReference>
<dbReference type="Ensembl" id="ENST00000366871.7">
    <molecule id="O15178-2"/>
    <property type="protein sequence ID" value="ENSP00000355836.3"/>
    <property type="gene ID" value="ENSG00000164458.10"/>
</dbReference>
<dbReference type="GeneID" id="6862"/>
<dbReference type="KEGG" id="hsa:6862"/>
<dbReference type="UCSC" id="uc003quu.4">
    <molecule id="O15178-1"/>
    <property type="organism name" value="human"/>
</dbReference>
<dbReference type="AGR" id="HGNC:11515"/>
<dbReference type="CTD" id="6862"/>
<dbReference type="DisGeNET" id="6862"/>
<dbReference type="GeneCards" id="TBXT"/>
<dbReference type="HGNC" id="HGNC:11515">
    <property type="gene designation" value="TBXT"/>
</dbReference>
<dbReference type="HPA" id="ENSG00000164458">
    <property type="expression patterns" value="Group enriched (parathyroid gland, pituitary gland)"/>
</dbReference>
<dbReference type="MalaCards" id="TBXT"/>
<dbReference type="MIM" id="182940">
    <property type="type" value="phenotype"/>
</dbReference>
<dbReference type="MIM" id="215400">
    <property type="type" value="phenotype"/>
</dbReference>
<dbReference type="MIM" id="601397">
    <property type="type" value="gene"/>
</dbReference>
<dbReference type="MIM" id="615709">
    <property type="type" value="phenotype"/>
</dbReference>
<dbReference type="neXtProt" id="NX_O15178"/>
<dbReference type="OpenTargets" id="ENSG00000164458"/>
<dbReference type="Orphanet" id="178">
    <property type="disease" value="Chordoma"/>
</dbReference>
<dbReference type="Orphanet" id="397927">
    <property type="disease" value="Sacral agenesis-abnormal ossification of the vertebral bodies-persistent notochordal canal syndrome"/>
</dbReference>
<dbReference type="PharmGKB" id="PA36296"/>
<dbReference type="VEuPathDB" id="HostDB:ENSG00000164458"/>
<dbReference type="eggNOG" id="KOG3585">
    <property type="taxonomic scope" value="Eukaryota"/>
</dbReference>
<dbReference type="GeneTree" id="ENSGT00940000157912"/>
<dbReference type="InParanoid" id="O15178"/>
<dbReference type="OrthoDB" id="7442607at2759"/>
<dbReference type="PAN-GO" id="O15178">
    <property type="GO annotations" value="7 GO annotations based on evolutionary models"/>
</dbReference>
<dbReference type="PhylomeDB" id="O15178"/>
<dbReference type="TreeFam" id="TF106341"/>
<dbReference type="PathwayCommons" id="O15178"/>
<dbReference type="Reactome" id="R-HSA-9733709">
    <property type="pathway name" value="Cardiogenesis"/>
</dbReference>
<dbReference type="Reactome" id="R-HSA-9754189">
    <property type="pathway name" value="Germ layer formation at gastrulation"/>
</dbReference>
<dbReference type="Reactome" id="R-HSA-9758919">
    <property type="pathway name" value="Epithelial-Mesenchymal Transition (EMT) during gastrulation"/>
</dbReference>
<dbReference type="Reactome" id="R-HSA-9793380">
    <property type="pathway name" value="Formation of paraxial mesoderm"/>
</dbReference>
<dbReference type="Reactome" id="R-HSA-9796292">
    <property type="pathway name" value="Formation of axial mesoderm"/>
</dbReference>
<dbReference type="Reactome" id="R-HSA-9823730">
    <property type="pathway name" value="Formation of definitive endoderm"/>
</dbReference>
<dbReference type="SignaLink" id="O15178"/>
<dbReference type="SIGNOR" id="O15178"/>
<dbReference type="BioGRID-ORCS" id="6862">
    <property type="hits" value="12 hits in 1164 CRISPR screens"/>
</dbReference>
<dbReference type="GeneWiki" id="Brachyury"/>
<dbReference type="GenomeRNAi" id="6862"/>
<dbReference type="Pharos" id="O15178">
    <property type="development level" value="Tbio"/>
</dbReference>
<dbReference type="PRO" id="PR:O15178"/>
<dbReference type="Proteomes" id="UP000005640">
    <property type="component" value="Chromosome 6"/>
</dbReference>
<dbReference type="RNAct" id="O15178">
    <property type="molecule type" value="protein"/>
</dbReference>
<dbReference type="Bgee" id="ENSG00000164458">
    <property type="expression patterns" value="Expressed in primordial germ cell in gonad and 37 other cell types or tissues"/>
</dbReference>
<dbReference type="ExpressionAtlas" id="O15178">
    <property type="expression patterns" value="baseline and differential"/>
</dbReference>
<dbReference type="GO" id="GO:0000785">
    <property type="term" value="C:chromatin"/>
    <property type="evidence" value="ECO:0000314"/>
    <property type="project" value="BHF-UCL"/>
</dbReference>
<dbReference type="GO" id="GO:0005654">
    <property type="term" value="C:nucleoplasm"/>
    <property type="evidence" value="ECO:0000314"/>
    <property type="project" value="HPA"/>
</dbReference>
<dbReference type="GO" id="GO:0005634">
    <property type="term" value="C:nucleus"/>
    <property type="evidence" value="ECO:0000314"/>
    <property type="project" value="UniProtKB"/>
</dbReference>
<dbReference type="GO" id="GO:0003700">
    <property type="term" value="F:DNA-binding transcription factor activity"/>
    <property type="evidence" value="ECO:0000303"/>
    <property type="project" value="ProtInc"/>
</dbReference>
<dbReference type="GO" id="GO:0000981">
    <property type="term" value="F:DNA-binding transcription factor activity, RNA polymerase II-specific"/>
    <property type="evidence" value="ECO:0000314"/>
    <property type="project" value="BHF-UCL"/>
</dbReference>
<dbReference type="GO" id="GO:0000978">
    <property type="term" value="F:RNA polymerase II cis-regulatory region sequence-specific DNA binding"/>
    <property type="evidence" value="ECO:0000314"/>
    <property type="project" value="BHF-UCL"/>
</dbReference>
<dbReference type="GO" id="GO:0061629">
    <property type="term" value="F:RNA polymerase II-specific DNA-binding transcription factor binding"/>
    <property type="evidence" value="ECO:0000353"/>
    <property type="project" value="BHF-UCL"/>
</dbReference>
<dbReference type="GO" id="GO:1990837">
    <property type="term" value="F:sequence-specific double-stranded DNA binding"/>
    <property type="evidence" value="ECO:0000314"/>
    <property type="project" value="ARUK-UCL"/>
</dbReference>
<dbReference type="GO" id="GO:0003714">
    <property type="term" value="F:transcription corepressor activity"/>
    <property type="evidence" value="ECO:0000250"/>
    <property type="project" value="BHF-UCL"/>
</dbReference>
<dbReference type="GO" id="GO:0008595">
    <property type="term" value="P:anterior/posterior axis specification, embryo"/>
    <property type="evidence" value="ECO:0000304"/>
    <property type="project" value="ProtInc"/>
</dbReference>
<dbReference type="GO" id="GO:0060379">
    <property type="term" value="P:cardiac muscle cell myoblast differentiation"/>
    <property type="evidence" value="ECO:0000314"/>
    <property type="project" value="BHF-UCL"/>
</dbReference>
<dbReference type="GO" id="GO:0001708">
    <property type="term" value="P:cell fate specification"/>
    <property type="evidence" value="ECO:0000318"/>
    <property type="project" value="GO_Central"/>
</dbReference>
<dbReference type="GO" id="GO:0003007">
    <property type="term" value="P:heart morphogenesis"/>
    <property type="evidence" value="ECO:0000314"/>
    <property type="project" value="BHF-UCL"/>
</dbReference>
<dbReference type="GO" id="GO:0007498">
    <property type="term" value="P:mesoderm development"/>
    <property type="evidence" value="ECO:0000304"/>
    <property type="project" value="ProtInc"/>
</dbReference>
<dbReference type="GO" id="GO:0001707">
    <property type="term" value="P:mesoderm formation"/>
    <property type="evidence" value="ECO:0000318"/>
    <property type="project" value="GO_Central"/>
</dbReference>
<dbReference type="GO" id="GO:0000122">
    <property type="term" value="P:negative regulation of transcription by RNA polymerase II"/>
    <property type="evidence" value="ECO:0000250"/>
    <property type="project" value="BHF-UCL"/>
</dbReference>
<dbReference type="GO" id="GO:0045944">
    <property type="term" value="P:positive regulation of transcription by RNA polymerase II"/>
    <property type="evidence" value="ECO:0000314"/>
    <property type="project" value="BHF-UCL"/>
</dbReference>
<dbReference type="GO" id="GO:0090009">
    <property type="term" value="P:primitive streak formation"/>
    <property type="evidence" value="ECO:0000303"/>
    <property type="project" value="BHF-UCL"/>
</dbReference>
<dbReference type="GO" id="GO:0006357">
    <property type="term" value="P:regulation of transcription by RNA polymerase II"/>
    <property type="evidence" value="ECO:0000318"/>
    <property type="project" value="GO_Central"/>
</dbReference>
<dbReference type="GO" id="GO:0007165">
    <property type="term" value="P:signal transduction"/>
    <property type="evidence" value="ECO:0000303"/>
    <property type="project" value="ProtInc"/>
</dbReference>
<dbReference type="GO" id="GO:0001756">
    <property type="term" value="P:somitogenesis"/>
    <property type="evidence" value="ECO:0000318"/>
    <property type="project" value="GO_Central"/>
</dbReference>
<dbReference type="CDD" id="cd20202">
    <property type="entry name" value="T-box_TBXT"/>
    <property type="match status" value="1"/>
</dbReference>
<dbReference type="FunFam" id="2.60.40.820:FF:000002">
    <property type="entry name" value="T-box transcription factor Brachyury"/>
    <property type="match status" value="1"/>
</dbReference>
<dbReference type="Gene3D" id="2.60.40.820">
    <property type="entry name" value="Transcription factor, T-box"/>
    <property type="match status" value="1"/>
</dbReference>
<dbReference type="InterPro" id="IPR008967">
    <property type="entry name" value="p53-like_TF_DNA-bd_sf"/>
</dbReference>
<dbReference type="InterPro" id="IPR046360">
    <property type="entry name" value="T-box_DNA-bd"/>
</dbReference>
<dbReference type="InterPro" id="IPR036960">
    <property type="entry name" value="T-box_sf"/>
</dbReference>
<dbReference type="InterPro" id="IPR002070">
    <property type="entry name" value="TF_Brachyury"/>
</dbReference>
<dbReference type="InterPro" id="IPR001699">
    <property type="entry name" value="TF_T-box"/>
</dbReference>
<dbReference type="InterPro" id="IPR018186">
    <property type="entry name" value="TF_T-box_CS"/>
</dbReference>
<dbReference type="PANTHER" id="PTHR11267">
    <property type="entry name" value="T-BOX PROTEIN-RELATED"/>
    <property type="match status" value="1"/>
</dbReference>
<dbReference type="PANTHER" id="PTHR11267:SF83">
    <property type="entry name" value="T-BOX TRANSCRIPTION FACTOR T"/>
    <property type="match status" value="1"/>
</dbReference>
<dbReference type="Pfam" id="PF00907">
    <property type="entry name" value="T-box"/>
    <property type="match status" value="1"/>
</dbReference>
<dbReference type="PRINTS" id="PR00938">
    <property type="entry name" value="BRACHYURY"/>
</dbReference>
<dbReference type="PRINTS" id="PR00937">
    <property type="entry name" value="TBOX"/>
</dbReference>
<dbReference type="SMART" id="SM00425">
    <property type="entry name" value="TBOX"/>
    <property type="match status" value="1"/>
</dbReference>
<dbReference type="SUPFAM" id="SSF49417">
    <property type="entry name" value="p53-like transcription factors"/>
    <property type="match status" value="1"/>
</dbReference>
<dbReference type="PROSITE" id="PS01283">
    <property type="entry name" value="TBOX_1"/>
    <property type="match status" value="1"/>
</dbReference>
<dbReference type="PROSITE" id="PS01264">
    <property type="entry name" value="TBOX_2"/>
    <property type="match status" value="1"/>
</dbReference>
<dbReference type="PROSITE" id="PS50252">
    <property type="entry name" value="TBOX_3"/>
    <property type="match status" value="1"/>
</dbReference>
<keyword id="KW-0002">3D-structure</keyword>
<keyword id="KW-0010">Activator</keyword>
<keyword id="KW-0025">Alternative splicing</keyword>
<keyword id="KW-0217">Developmental protein</keyword>
<keyword id="KW-0225">Disease variant</keyword>
<keyword id="KW-0238">DNA-binding</keyword>
<keyword id="KW-0539">Nucleus</keyword>
<keyword id="KW-1267">Proteomics identification</keyword>
<keyword id="KW-1185">Reference proteome</keyword>
<keyword id="KW-0804">Transcription</keyword>
<keyword id="KW-0805">Transcription regulation</keyword>